<comment type="function">
    <text evidence="1">Specifically methylates position 2 of adenine 2503 in 23S rRNA and position 2 of adenine 37 in tRNAs. m2A2503 modification seems to play a crucial role in the proofreading step occurring at the peptidyl transferase center and thus would serve to optimize ribosomal fidelity.</text>
</comment>
<comment type="catalytic activity">
    <reaction evidence="1">
        <text>adenosine(2503) in 23S rRNA + 2 reduced [2Fe-2S]-[ferredoxin] + 2 S-adenosyl-L-methionine = 2-methyladenosine(2503) in 23S rRNA + 5'-deoxyadenosine + L-methionine + 2 oxidized [2Fe-2S]-[ferredoxin] + S-adenosyl-L-homocysteine</text>
        <dbReference type="Rhea" id="RHEA:42916"/>
        <dbReference type="Rhea" id="RHEA-COMP:10000"/>
        <dbReference type="Rhea" id="RHEA-COMP:10001"/>
        <dbReference type="Rhea" id="RHEA-COMP:10152"/>
        <dbReference type="Rhea" id="RHEA-COMP:10282"/>
        <dbReference type="ChEBI" id="CHEBI:17319"/>
        <dbReference type="ChEBI" id="CHEBI:33737"/>
        <dbReference type="ChEBI" id="CHEBI:33738"/>
        <dbReference type="ChEBI" id="CHEBI:57844"/>
        <dbReference type="ChEBI" id="CHEBI:57856"/>
        <dbReference type="ChEBI" id="CHEBI:59789"/>
        <dbReference type="ChEBI" id="CHEBI:74411"/>
        <dbReference type="ChEBI" id="CHEBI:74497"/>
        <dbReference type="EC" id="2.1.1.192"/>
    </reaction>
</comment>
<comment type="catalytic activity">
    <reaction evidence="1">
        <text>adenosine(37) in tRNA + 2 reduced [2Fe-2S]-[ferredoxin] + 2 S-adenosyl-L-methionine = 2-methyladenosine(37) in tRNA + 5'-deoxyadenosine + L-methionine + 2 oxidized [2Fe-2S]-[ferredoxin] + S-adenosyl-L-homocysteine</text>
        <dbReference type="Rhea" id="RHEA:43332"/>
        <dbReference type="Rhea" id="RHEA-COMP:10000"/>
        <dbReference type="Rhea" id="RHEA-COMP:10001"/>
        <dbReference type="Rhea" id="RHEA-COMP:10162"/>
        <dbReference type="Rhea" id="RHEA-COMP:10485"/>
        <dbReference type="ChEBI" id="CHEBI:17319"/>
        <dbReference type="ChEBI" id="CHEBI:33737"/>
        <dbReference type="ChEBI" id="CHEBI:33738"/>
        <dbReference type="ChEBI" id="CHEBI:57844"/>
        <dbReference type="ChEBI" id="CHEBI:57856"/>
        <dbReference type="ChEBI" id="CHEBI:59789"/>
        <dbReference type="ChEBI" id="CHEBI:74411"/>
        <dbReference type="ChEBI" id="CHEBI:74497"/>
        <dbReference type="EC" id="2.1.1.192"/>
    </reaction>
</comment>
<comment type="cofactor">
    <cofactor evidence="1">
        <name>[4Fe-4S] cluster</name>
        <dbReference type="ChEBI" id="CHEBI:49883"/>
    </cofactor>
    <text evidence="1">Binds 1 [4Fe-4S] cluster. The cluster is coordinated with 3 cysteines and an exchangeable S-adenosyl-L-methionine.</text>
</comment>
<comment type="subcellular location">
    <subcellularLocation>
        <location evidence="1">Cytoplasm</location>
    </subcellularLocation>
</comment>
<comment type="miscellaneous">
    <text evidence="1">Reaction proceeds by a ping-pong mechanism involving intermediate methylation of a conserved cysteine residue.</text>
</comment>
<comment type="similarity">
    <text evidence="1">Belongs to the radical SAM superfamily. RlmN family.</text>
</comment>
<proteinExistence type="inferred from homology"/>
<dbReference type="EC" id="2.1.1.192" evidence="1"/>
<dbReference type="EMBL" id="CP000247">
    <property type="protein sequence ID" value="ABG70511.1"/>
    <property type="molecule type" value="Genomic_DNA"/>
</dbReference>
<dbReference type="RefSeq" id="WP_000003317.1">
    <property type="nucleotide sequence ID" value="NC_008253.1"/>
</dbReference>
<dbReference type="SMR" id="Q0TEW8"/>
<dbReference type="KEGG" id="ecp:ECP_2522"/>
<dbReference type="HOGENOM" id="CLU_029101_0_0_6"/>
<dbReference type="Proteomes" id="UP000009182">
    <property type="component" value="Chromosome"/>
</dbReference>
<dbReference type="GO" id="GO:0005737">
    <property type="term" value="C:cytoplasm"/>
    <property type="evidence" value="ECO:0007669"/>
    <property type="project" value="UniProtKB-SubCell"/>
</dbReference>
<dbReference type="GO" id="GO:0051539">
    <property type="term" value="F:4 iron, 4 sulfur cluster binding"/>
    <property type="evidence" value="ECO:0007669"/>
    <property type="project" value="UniProtKB-UniRule"/>
</dbReference>
<dbReference type="GO" id="GO:0046872">
    <property type="term" value="F:metal ion binding"/>
    <property type="evidence" value="ECO:0007669"/>
    <property type="project" value="UniProtKB-KW"/>
</dbReference>
<dbReference type="GO" id="GO:0070040">
    <property type="term" value="F:rRNA (adenine(2503)-C2-)-methyltransferase activity"/>
    <property type="evidence" value="ECO:0007669"/>
    <property type="project" value="UniProtKB-UniRule"/>
</dbReference>
<dbReference type="GO" id="GO:0019843">
    <property type="term" value="F:rRNA binding"/>
    <property type="evidence" value="ECO:0007669"/>
    <property type="project" value="UniProtKB-UniRule"/>
</dbReference>
<dbReference type="GO" id="GO:0002935">
    <property type="term" value="F:tRNA (adenine(37)-C2)-methyltransferase activity"/>
    <property type="evidence" value="ECO:0007669"/>
    <property type="project" value="UniProtKB-UniRule"/>
</dbReference>
<dbReference type="GO" id="GO:0000049">
    <property type="term" value="F:tRNA binding"/>
    <property type="evidence" value="ECO:0007669"/>
    <property type="project" value="UniProtKB-UniRule"/>
</dbReference>
<dbReference type="GO" id="GO:0070475">
    <property type="term" value="P:rRNA base methylation"/>
    <property type="evidence" value="ECO:0007669"/>
    <property type="project" value="UniProtKB-UniRule"/>
</dbReference>
<dbReference type="GO" id="GO:0030488">
    <property type="term" value="P:tRNA methylation"/>
    <property type="evidence" value="ECO:0007669"/>
    <property type="project" value="UniProtKB-UniRule"/>
</dbReference>
<dbReference type="CDD" id="cd01335">
    <property type="entry name" value="Radical_SAM"/>
    <property type="match status" value="1"/>
</dbReference>
<dbReference type="FunFam" id="1.10.150.530:FF:000001">
    <property type="entry name" value="Dual-specificity RNA methyltransferase RlmN"/>
    <property type="match status" value="1"/>
</dbReference>
<dbReference type="FunFam" id="3.20.20.70:FF:000008">
    <property type="entry name" value="Dual-specificity RNA methyltransferase RlmN"/>
    <property type="match status" value="1"/>
</dbReference>
<dbReference type="Gene3D" id="1.10.150.530">
    <property type="match status" value="1"/>
</dbReference>
<dbReference type="Gene3D" id="3.20.20.70">
    <property type="entry name" value="Aldolase class I"/>
    <property type="match status" value="1"/>
</dbReference>
<dbReference type="HAMAP" id="MF_01849">
    <property type="entry name" value="RNA_methyltr_RlmN"/>
    <property type="match status" value="1"/>
</dbReference>
<dbReference type="InterPro" id="IPR013785">
    <property type="entry name" value="Aldolase_TIM"/>
</dbReference>
<dbReference type="InterPro" id="IPR040072">
    <property type="entry name" value="Methyltransferase_A"/>
</dbReference>
<dbReference type="InterPro" id="IPR048641">
    <property type="entry name" value="RlmN_N"/>
</dbReference>
<dbReference type="InterPro" id="IPR027492">
    <property type="entry name" value="RNA_MTrfase_RlmN"/>
</dbReference>
<dbReference type="InterPro" id="IPR004383">
    <property type="entry name" value="rRNA_lsu_MTrfase_RlmN/Cfr"/>
</dbReference>
<dbReference type="InterPro" id="IPR007197">
    <property type="entry name" value="rSAM"/>
</dbReference>
<dbReference type="NCBIfam" id="NF008396">
    <property type="entry name" value="PRK11194.1"/>
    <property type="match status" value="1"/>
</dbReference>
<dbReference type="NCBIfam" id="TIGR00048">
    <property type="entry name" value="rRNA_mod_RlmN"/>
    <property type="match status" value="1"/>
</dbReference>
<dbReference type="PANTHER" id="PTHR30544">
    <property type="entry name" value="23S RRNA METHYLTRANSFERASE"/>
    <property type="match status" value="1"/>
</dbReference>
<dbReference type="PANTHER" id="PTHR30544:SF5">
    <property type="entry name" value="RADICAL SAM CORE DOMAIN-CONTAINING PROTEIN"/>
    <property type="match status" value="1"/>
</dbReference>
<dbReference type="Pfam" id="PF04055">
    <property type="entry name" value="Radical_SAM"/>
    <property type="match status" value="1"/>
</dbReference>
<dbReference type="Pfam" id="PF21016">
    <property type="entry name" value="RlmN_N"/>
    <property type="match status" value="1"/>
</dbReference>
<dbReference type="PIRSF" id="PIRSF006004">
    <property type="entry name" value="CHP00048"/>
    <property type="match status" value="1"/>
</dbReference>
<dbReference type="SFLD" id="SFLDF00275">
    <property type="entry name" value="adenosine_C2_methyltransferase"/>
    <property type="match status" value="1"/>
</dbReference>
<dbReference type="SFLD" id="SFLDG01062">
    <property type="entry name" value="methyltransferase_(Class_A)"/>
    <property type="match status" value="1"/>
</dbReference>
<dbReference type="SUPFAM" id="SSF102114">
    <property type="entry name" value="Radical SAM enzymes"/>
    <property type="match status" value="1"/>
</dbReference>
<dbReference type="PROSITE" id="PS51918">
    <property type="entry name" value="RADICAL_SAM"/>
    <property type="match status" value="1"/>
</dbReference>
<reference key="1">
    <citation type="journal article" date="2006" name="Mol. Microbiol.">
        <title>Role of pathogenicity island-associated integrases in the genome plasticity of uropathogenic Escherichia coli strain 536.</title>
        <authorList>
            <person name="Hochhut B."/>
            <person name="Wilde C."/>
            <person name="Balling G."/>
            <person name="Middendorf B."/>
            <person name="Dobrindt U."/>
            <person name="Brzuszkiewicz E."/>
            <person name="Gottschalk G."/>
            <person name="Carniel E."/>
            <person name="Hacker J."/>
        </authorList>
    </citation>
    <scope>NUCLEOTIDE SEQUENCE [LARGE SCALE GENOMIC DNA]</scope>
    <source>
        <strain>536 / UPEC</strain>
    </source>
</reference>
<accession>Q0TEW8</accession>
<keyword id="KW-0004">4Fe-4S</keyword>
<keyword id="KW-0963">Cytoplasm</keyword>
<keyword id="KW-1015">Disulfide bond</keyword>
<keyword id="KW-0408">Iron</keyword>
<keyword id="KW-0411">Iron-sulfur</keyword>
<keyword id="KW-0479">Metal-binding</keyword>
<keyword id="KW-0489">Methyltransferase</keyword>
<keyword id="KW-0698">rRNA processing</keyword>
<keyword id="KW-0949">S-adenosyl-L-methionine</keyword>
<keyword id="KW-0808">Transferase</keyword>
<keyword id="KW-0819">tRNA processing</keyword>
<name>RLMN_ECOL5</name>
<evidence type="ECO:0000255" key="1">
    <source>
        <dbReference type="HAMAP-Rule" id="MF_01849"/>
    </source>
</evidence>
<evidence type="ECO:0000255" key="2">
    <source>
        <dbReference type="PROSITE-ProRule" id="PRU01266"/>
    </source>
</evidence>
<sequence length="384" mass="43086">MSEQLVTPENVTTKDGKINLLDLNRQQMREFFKDLGEKPFRADQVMKWMYHYCCDNFDEMTDINKVLRGKLKEVAEIRAPEVVEEQRSSDGTIKWAIAVGDQRVETVYIPEDDRATLCVSSQVGCALECKFCSTAQQGFNRNLRVSEIIGQVWRAAKIVGAAKVTGQRPITNVVMMGMGEPLLNLNNVVPAMEIMLDDFGFGLSKRRVTLSTSGVVPALDKLGDMIDVALAISLHAPNDEIRDEIVPINKKYNIETFLAAVRRYLEKSNANQGRVTIEYVMLDHVNDGTEHAHQLAELLKDTPCKINLIPWNPFPGAPYGRSSNSRIDRFSKVLMSYGFTTIVRKTRGDDIDAACGQLAGDVIDRTKRTLRKRMQGEAIDIKAV</sequence>
<organism>
    <name type="scientific">Escherichia coli O6:K15:H31 (strain 536 / UPEC)</name>
    <dbReference type="NCBI Taxonomy" id="362663"/>
    <lineage>
        <taxon>Bacteria</taxon>
        <taxon>Pseudomonadati</taxon>
        <taxon>Pseudomonadota</taxon>
        <taxon>Gammaproteobacteria</taxon>
        <taxon>Enterobacterales</taxon>
        <taxon>Enterobacteriaceae</taxon>
        <taxon>Escherichia</taxon>
    </lineage>
</organism>
<gene>
    <name evidence="1" type="primary">rlmN</name>
    <name type="ordered locus">ECP_2522</name>
</gene>
<protein>
    <recommendedName>
        <fullName evidence="1">Dual-specificity RNA methyltransferase RlmN</fullName>
        <ecNumber evidence="1">2.1.1.192</ecNumber>
    </recommendedName>
    <alternativeName>
        <fullName evidence="1">23S rRNA (adenine(2503)-C(2))-methyltransferase</fullName>
    </alternativeName>
    <alternativeName>
        <fullName evidence="1">23S rRNA m2A2503 methyltransferase</fullName>
    </alternativeName>
    <alternativeName>
        <fullName evidence="1">Ribosomal RNA large subunit methyltransferase N</fullName>
    </alternativeName>
    <alternativeName>
        <fullName evidence="1">tRNA (adenine(37)-C(2))-methyltransferase</fullName>
    </alternativeName>
    <alternativeName>
        <fullName evidence="1">tRNA m2A37 methyltransferase</fullName>
    </alternativeName>
</protein>
<feature type="chain" id="PRO_0000350172" description="Dual-specificity RNA methyltransferase RlmN">
    <location>
        <begin position="1"/>
        <end position="384"/>
    </location>
</feature>
<feature type="domain" description="Radical SAM core" evidence="2">
    <location>
        <begin position="111"/>
        <end position="350"/>
    </location>
</feature>
<feature type="active site" description="Proton acceptor" evidence="1">
    <location>
        <position position="105"/>
    </location>
</feature>
<feature type="active site" description="S-methylcysteine intermediate" evidence="1">
    <location>
        <position position="355"/>
    </location>
</feature>
<feature type="binding site" evidence="1">
    <location>
        <position position="125"/>
    </location>
    <ligand>
        <name>[4Fe-4S] cluster</name>
        <dbReference type="ChEBI" id="CHEBI:49883"/>
        <note>4Fe-4S-S-AdoMet</note>
    </ligand>
</feature>
<feature type="binding site" evidence="1">
    <location>
        <position position="129"/>
    </location>
    <ligand>
        <name>[4Fe-4S] cluster</name>
        <dbReference type="ChEBI" id="CHEBI:49883"/>
        <note>4Fe-4S-S-AdoMet</note>
    </ligand>
</feature>
<feature type="binding site" evidence="1">
    <location>
        <position position="132"/>
    </location>
    <ligand>
        <name>[4Fe-4S] cluster</name>
        <dbReference type="ChEBI" id="CHEBI:49883"/>
        <note>4Fe-4S-S-AdoMet</note>
    </ligand>
</feature>
<feature type="binding site" evidence="1">
    <location>
        <begin position="179"/>
        <end position="180"/>
    </location>
    <ligand>
        <name>S-adenosyl-L-methionine</name>
        <dbReference type="ChEBI" id="CHEBI:59789"/>
    </ligand>
</feature>
<feature type="binding site" evidence="1">
    <location>
        <position position="211"/>
    </location>
    <ligand>
        <name>S-adenosyl-L-methionine</name>
        <dbReference type="ChEBI" id="CHEBI:59789"/>
    </ligand>
</feature>
<feature type="binding site" evidence="1">
    <location>
        <begin position="233"/>
        <end position="235"/>
    </location>
    <ligand>
        <name>S-adenosyl-L-methionine</name>
        <dbReference type="ChEBI" id="CHEBI:59789"/>
    </ligand>
</feature>
<feature type="binding site" evidence="1">
    <location>
        <position position="312"/>
    </location>
    <ligand>
        <name>S-adenosyl-L-methionine</name>
        <dbReference type="ChEBI" id="CHEBI:59789"/>
    </ligand>
</feature>
<feature type="disulfide bond" description="(transient)" evidence="1">
    <location>
        <begin position="118"/>
        <end position="355"/>
    </location>
</feature>